<feature type="chain" id="PRO_1000049235" description="Small ribosomal subunit protein bS16">
    <location>
        <begin position="1"/>
        <end position="75"/>
    </location>
</feature>
<proteinExistence type="inferred from homology"/>
<reference key="1">
    <citation type="submission" date="2007-07" db="EMBL/GenBank/DDBJ databases">
        <title>Complete genome sequence of Campylobacter jejuni subsp doylei 269.97 isolated from human blood.</title>
        <authorList>
            <person name="Fouts D.E."/>
            <person name="Mongodin E.F."/>
            <person name="Puiu D."/>
            <person name="Sebastian Y."/>
            <person name="Miller W.G."/>
            <person name="Mandrell R.E."/>
            <person name="Lastovica A.J."/>
            <person name="Nelson K.E."/>
        </authorList>
    </citation>
    <scope>NUCLEOTIDE SEQUENCE [LARGE SCALE GENOMIC DNA]</scope>
    <source>
        <strain>ATCC BAA-1458 / RM4099 / 269.97</strain>
    </source>
</reference>
<name>RS16_CAMJD</name>
<comment type="similarity">
    <text evidence="1">Belongs to the bacterial ribosomal protein bS16 family.</text>
</comment>
<sequence length="75" mass="8678">MTVIRLTRMGRTKRPFYRIVVTDSRKRRDGGWIESIGYYNPMVEPEVIKVDAERLAYWKSVGAKLSDKVASITSK</sequence>
<accession>A7H4B5</accession>
<protein>
    <recommendedName>
        <fullName evidence="1">Small ribosomal subunit protein bS16</fullName>
    </recommendedName>
    <alternativeName>
        <fullName evidence="2">30S ribosomal protein S16</fullName>
    </alternativeName>
</protein>
<keyword id="KW-0687">Ribonucleoprotein</keyword>
<keyword id="KW-0689">Ribosomal protein</keyword>
<organism>
    <name type="scientific">Campylobacter jejuni subsp. doylei (strain ATCC BAA-1458 / RM4099 / 269.97)</name>
    <dbReference type="NCBI Taxonomy" id="360109"/>
    <lineage>
        <taxon>Bacteria</taxon>
        <taxon>Pseudomonadati</taxon>
        <taxon>Campylobacterota</taxon>
        <taxon>Epsilonproteobacteria</taxon>
        <taxon>Campylobacterales</taxon>
        <taxon>Campylobacteraceae</taxon>
        <taxon>Campylobacter</taxon>
    </lineage>
</organism>
<evidence type="ECO:0000255" key="1">
    <source>
        <dbReference type="HAMAP-Rule" id="MF_00385"/>
    </source>
</evidence>
<evidence type="ECO:0000305" key="2"/>
<dbReference type="EMBL" id="CP000768">
    <property type="protein sequence ID" value="ABS44512.1"/>
    <property type="molecule type" value="Genomic_DNA"/>
</dbReference>
<dbReference type="SMR" id="A7H4B5"/>
<dbReference type="KEGG" id="cjd:JJD26997_1296"/>
<dbReference type="HOGENOM" id="CLU_100590_5_1_7"/>
<dbReference type="Proteomes" id="UP000002302">
    <property type="component" value="Chromosome"/>
</dbReference>
<dbReference type="GO" id="GO:0005737">
    <property type="term" value="C:cytoplasm"/>
    <property type="evidence" value="ECO:0007669"/>
    <property type="project" value="UniProtKB-ARBA"/>
</dbReference>
<dbReference type="GO" id="GO:0015935">
    <property type="term" value="C:small ribosomal subunit"/>
    <property type="evidence" value="ECO:0007669"/>
    <property type="project" value="TreeGrafter"/>
</dbReference>
<dbReference type="GO" id="GO:0003735">
    <property type="term" value="F:structural constituent of ribosome"/>
    <property type="evidence" value="ECO:0007669"/>
    <property type="project" value="InterPro"/>
</dbReference>
<dbReference type="GO" id="GO:0006412">
    <property type="term" value="P:translation"/>
    <property type="evidence" value="ECO:0007669"/>
    <property type="project" value="UniProtKB-UniRule"/>
</dbReference>
<dbReference type="FunFam" id="3.30.1320.10:FF:000005">
    <property type="entry name" value="30S ribosomal protein S16"/>
    <property type="match status" value="1"/>
</dbReference>
<dbReference type="Gene3D" id="3.30.1320.10">
    <property type="match status" value="1"/>
</dbReference>
<dbReference type="HAMAP" id="MF_00385">
    <property type="entry name" value="Ribosomal_bS16"/>
    <property type="match status" value="1"/>
</dbReference>
<dbReference type="InterPro" id="IPR000307">
    <property type="entry name" value="Ribosomal_bS16"/>
</dbReference>
<dbReference type="InterPro" id="IPR020592">
    <property type="entry name" value="Ribosomal_bS16_CS"/>
</dbReference>
<dbReference type="InterPro" id="IPR023803">
    <property type="entry name" value="Ribosomal_bS16_dom_sf"/>
</dbReference>
<dbReference type="NCBIfam" id="TIGR00002">
    <property type="entry name" value="S16"/>
    <property type="match status" value="1"/>
</dbReference>
<dbReference type="PANTHER" id="PTHR12919">
    <property type="entry name" value="30S RIBOSOMAL PROTEIN S16"/>
    <property type="match status" value="1"/>
</dbReference>
<dbReference type="PANTHER" id="PTHR12919:SF20">
    <property type="entry name" value="SMALL RIBOSOMAL SUBUNIT PROTEIN BS16M"/>
    <property type="match status" value="1"/>
</dbReference>
<dbReference type="Pfam" id="PF00886">
    <property type="entry name" value="Ribosomal_S16"/>
    <property type="match status" value="1"/>
</dbReference>
<dbReference type="SUPFAM" id="SSF54565">
    <property type="entry name" value="Ribosomal protein S16"/>
    <property type="match status" value="1"/>
</dbReference>
<dbReference type="PROSITE" id="PS00732">
    <property type="entry name" value="RIBOSOMAL_S16"/>
    <property type="match status" value="1"/>
</dbReference>
<gene>
    <name evidence="1" type="primary">rpsP</name>
    <name type="ordered locus">JJD26997_1296</name>
</gene>